<dbReference type="EC" id="1.13.11.1" evidence="3"/>
<dbReference type="EC" id="1.13.11.37" evidence="3"/>
<dbReference type="EMBL" id="AM269982">
    <property type="protein sequence ID" value="CAK44129.1"/>
    <property type="molecule type" value="Genomic_DNA"/>
</dbReference>
<dbReference type="RefSeq" id="XP_001389637.1">
    <property type="nucleotide sequence ID" value="XM_001389600.1"/>
</dbReference>
<dbReference type="SMR" id="A2QAP8"/>
<dbReference type="EnsemblFungi" id="CAK44129">
    <property type="protein sequence ID" value="CAK44129"/>
    <property type="gene ID" value="An01g12310"/>
</dbReference>
<dbReference type="GeneID" id="4978318"/>
<dbReference type="KEGG" id="ang:An01g12310"/>
<dbReference type="VEuPathDB" id="FungiDB:An01g12310"/>
<dbReference type="HOGENOM" id="CLU_046727_2_0_1"/>
<dbReference type="Proteomes" id="UP000006706">
    <property type="component" value="Chromosome 2R"/>
</dbReference>
<dbReference type="GO" id="GO:0047074">
    <property type="term" value="F:4-hydroxycatechol 1,2-dioxygenase activity"/>
    <property type="evidence" value="ECO:0007669"/>
    <property type="project" value="UniProtKB-EC"/>
</dbReference>
<dbReference type="GO" id="GO:0018576">
    <property type="term" value="F:catechol 1,2-dioxygenase activity"/>
    <property type="evidence" value="ECO:0007669"/>
    <property type="project" value="InterPro"/>
</dbReference>
<dbReference type="GO" id="GO:0008199">
    <property type="term" value="F:ferric iron binding"/>
    <property type="evidence" value="ECO:0007669"/>
    <property type="project" value="InterPro"/>
</dbReference>
<dbReference type="GO" id="GO:0009056">
    <property type="term" value="P:catabolic process"/>
    <property type="evidence" value="ECO:0007669"/>
    <property type="project" value="UniProtKB-KW"/>
</dbReference>
<dbReference type="GO" id="GO:0009712">
    <property type="term" value="P:catechol-containing compound metabolic process"/>
    <property type="evidence" value="ECO:0007669"/>
    <property type="project" value="InterPro"/>
</dbReference>
<dbReference type="CDD" id="cd03461">
    <property type="entry name" value="1_2-HQD"/>
    <property type="match status" value="1"/>
</dbReference>
<dbReference type="Gene3D" id="2.60.130.10">
    <property type="entry name" value="Aromatic compound dioxygenase"/>
    <property type="match status" value="1"/>
</dbReference>
<dbReference type="InterPro" id="IPR039390">
    <property type="entry name" value="1_2-HQD/HQD"/>
</dbReference>
<dbReference type="InterPro" id="IPR007535">
    <property type="entry name" value="Catechol_dOase_N"/>
</dbReference>
<dbReference type="InterPro" id="IPR000627">
    <property type="entry name" value="Intradiol_dOase_C"/>
</dbReference>
<dbReference type="InterPro" id="IPR015889">
    <property type="entry name" value="Intradiol_dOase_core"/>
</dbReference>
<dbReference type="InterPro" id="IPR050770">
    <property type="entry name" value="Intradiol_RC_Dioxygenase"/>
</dbReference>
<dbReference type="PANTHER" id="PTHR33711">
    <property type="entry name" value="DIOXYGENASE, PUTATIVE (AFU_ORTHOLOGUE AFUA_2G02910)-RELATED"/>
    <property type="match status" value="1"/>
</dbReference>
<dbReference type="PANTHER" id="PTHR33711:SF7">
    <property type="entry name" value="INTRADIOL RING-CLEAVAGE DIOXYGENASES DOMAIN-CONTAINING PROTEIN-RELATED"/>
    <property type="match status" value="1"/>
</dbReference>
<dbReference type="Pfam" id="PF00775">
    <property type="entry name" value="Dioxygenase_C"/>
    <property type="match status" value="1"/>
</dbReference>
<dbReference type="Pfam" id="PF04444">
    <property type="entry name" value="Dioxygenase_N"/>
    <property type="match status" value="1"/>
</dbReference>
<dbReference type="SUPFAM" id="SSF49482">
    <property type="entry name" value="Aromatic compound dioxygenase"/>
    <property type="match status" value="1"/>
</dbReference>
<gene>
    <name evidence="4" type="primary">hqdA</name>
    <name type="ORF">An01g12310</name>
</gene>
<keyword id="KW-0058">Aromatic hydrocarbons catabolism</keyword>
<keyword id="KW-0223">Dioxygenase</keyword>
<keyword id="KW-0408">Iron</keyword>
<keyword id="KW-0479">Metal-binding</keyword>
<keyword id="KW-0560">Oxidoreductase</keyword>
<keyword id="KW-1185">Reference proteome</keyword>
<evidence type="ECO:0000250" key="1">
    <source>
        <dbReference type="UniProtKB" id="P86029"/>
    </source>
</evidence>
<evidence type="ECO:0000250" key="2">
    <source>
        <dbReference type="UniProtKB" id="Q5PXQ6"/>
    </source>
</evidence>
<evidence type="ECO:0000269" key="3">
    <source ref="2"/>
</evidence>
<evidence type="ECO:0000303" key="4">
    <source ref="2"/>
</evidence>
<evidence type="ECO:0000305" key="5"/>
<organism>
    <name type="scientific">Aspergillus niger (strain ATCC MYA-4892 / CBS 513.88 / FGSC A1513)</name>
    <dbReference type="NCBI Taxonomy" id="425011"/>
    <lineage>
        <taxon>Eukaryota</taxon>
        <taxon>Fungi</taxon>
        <taxon>Dikarya</taxon>
        <taxon>Ascomycota</taxon>
        <taxon>Pezizomycotina</taxon>
        <taxon>Eurotiomycetes</taxon>
        <taxon>Eurotiomycetidae</taxon>
        <taxon>Eurotiales</taxon>
        <taxon>Aspergillaceae</taxon>
        <taxon>Aspergillus</taxon>
        <taxon>Aspergillus subgen. Circumdati</taxon>
    </lineage>
</organism>
<sequence length="329" mass="36652">MDPSKVKIPPMKDLTVDNITENVIRINSLCQDERLKYVLERLVTHLHDFARETRLSTDEWMTGLRFLTEVGKICSDVRQEYILLSDILGLSILVDSIDHPKPPNSTEGTVLGPFHTHDAEPLTPGASISHDPAGEPLLVVCTVKDTHGNPVSDVKIDIWETDSTGHYDVQYAGRDGPDGRCIMTSDKEGVFWFKAITPVPYPIPHDGPVGKLLKLLGRHPYRPSHMHFMFEKGGFDHLITALYLRNDPYETSDAVFGVKDSLVVDIGKAGPEYAAKYGVSEDHALLTYDFVLVSDEETSELRARNSKEALDKLGRKVKIVNGLPVPDLD</sequence>
<reference key="1">
    <citation type="journal article" date="2007" name="Nat. Biotechnol.">
        <title>Genome sequencing and analysis of the versatile cell factory Aspergillus niger CBS 513.88.</title>
        <authorList>
            <person name="Pel H.J."/>
            <person name="de Winde J.H."/>
            <person name="Archer D.B."/>
            <person name="Dyer P.S."/>
            <person name="Hofmann G."/>
            <person name="Schaap P.J."/>
            <person name="Turner G."/>
            <person name="de Vries R.P."/>
            <person name="Albang R."/>
            <person name="Albermann K."/>
            <person name="Andersen M.R."/>
            <person name="Bendtsen J.D."/>
            <person name="Benen J.A.E."/>
            <person name="van den Berg M."/>
            <person name="Breestraat S."/>
            <person name="Caddick M.X."/>
            <person name="Contreras R."/>
            <person name="Cornell M."/>
            <person name="Coutinho P.M."/>
            <person name="Danchin E.G.J."/>
            <person name="Debets A.J.M."/>
            <person name="Dekker P."/>
            <person name="van Dijck P.W.M."/>
            <person name="van Dijk A."/>
            <person name="Dijkhuizen L."/>
            <person name="Driessen A.J.M."/>
            <person name="d'Enfert C."/>
            <person name="Geysens S."/>
            <person name="Goosen C."/>
            <person name="Groot G.S.P."/>
            <person name="de Groot P.W.J."/>
            <person name="Guillemette T."/>
            <person name="Henrissat B."/>
            <person name="Herweijer M."/>
            <person name="van den Hombergh J.P.T.W."/>
            <person name="van den Hondel C.A.M.J.J."/>
            <person name="van der Heijden R.T.J.M."/>
            <person name="van der Kaaij R.M."/>
            <person name="Klis F.M."/>
            <person name="Kools H.J."/>
            <person name="Kubicek C.P."/>
            <person name="van Kuyk P.A."/>
            <person name="Lauber J."/>
            <person name="Lu X."/>
            <person name="van der Maarel M.J.E.C."/>
            <person name="Meulenberg R."/>
            <person name="Menke H."/>
            <person name="Mortimer M.A."/>
            <person name="Nielsen J."/>
            <person name="Oliver S.G."/>
            <person name="Olsthoorn M."/>
            <person name="Pal K."/>
            <person name="van Peij N.N.M.E."/>
            <person name="Ram A.F.J."/>
            <person name="Rinas U."/>
            <person name="Roubos J.A."/>
            <person name="Sagt C.M.J."/>
            <person name="Schmoll M."/>
            <person name="Sun J."/>
            <person name="Ussery D."/>
            <person name="Varga J."/>
            <person name="Vervecken W."/>
            <person name="van de Vondervoort P.J.J."/>
            <person name="Wedler H."/>
            <person name="Woesten H.A.B."/>
            <person name="Zeng A.-P."/>
            <person name="van Ooyen A.J.J."/>
            <person name="Visser J."/>
            <person name="Stam H."/>
        </authorList>
    </citation>
    <scope>NUCLEOTIDE SEQUENCE [LARGE SCALE GENOMIC DNA]</scope>
    <source>
        <strain>ATCC MYA-4892 / CBS 513.88 / FGSC A1513</strain>
    </source>
</reference>
<reference key="2">
    <citation type="journal article" date="2019" name="ACS Sustain. Chem. Eng.">
        <title>Discovery of novel p-hydroxybenzoate-m-hydroxylase, protocatechuate 3,4 ring-cleavage dioxygenase, and hydroxyquinol 1,2 ring-cleavage dioxygenase from the filamentous fungus Aspergillus niger.</title>
        <authorList>
            <person name="Lubbers R.J.M."/>
            <person name="Dilokpimol A."/>
            <person name="Peng M."/>
            <person name="Visser J."/>
            <person name="Makela M.R."/>
            <person name="Hilden K.S."/>
            <person name="de Vries R.P."/>
        </authorList>
    </citation>
    <scope>INDUCTION</scope>
    <scope>FUNCTION</scope>
    <scope>DISRUPTION PHENOTYPE</scope>
    <scope>CATALYTIC ACTIVITY</scope>
    <scope>SUBUNIT</scope>
</reference>
<protein>
    <recommendedName>
        <fullName evidence="4">Intradiol ring-cleavage dioxygenase hqdA</fullName>
        <ecNumber evidence="3">1.13.11.1</ecNumber>
        <ecNumber evidence="3">1.13.11.37</ecNumber>
    </recommendedName>
</protein>
<proteinExistence type="evidence at protein level"/>
<name>HQDA_ASPNC</name>
<comment type="function">
    <text evidence="3">Intradiol ring-cleavage dioxygenase involved in an alternative pathway to the protocatechuic acid pathway since it is active on hydroxyquinol and catechol but not on protocatechuic acid.</text>
</comment>
<comment type="catalytic activity">
    <reaction evidence="3">
        <text>catechol + O2 = cis,cis-muconate + 2 H(+)</text>
        <dbReference type="Rhea" id="RHEA:23852"/>
        <dbReference type="ChEBI" id="CHEBI:15378"/>
        <dbReference type="ChEBI" id="CHEBI:15379"/>
        <dbReference type="ChEBI" id="CHEBI:18135"/>
        <dbReference type="ChEBI" id="CHEBI:32379"/>
        <dbReference type="EC" id="1.13.11.1"/>
    </reaction>
    <physiologicalReaction direction="left-to-right" evidence="3">
        <dbReference type="Rhea" id="RHEA:23853"/>
    </physiologicalReaction>
</comment>
<comment type="catalytic activity">
    <reaction evidence="3">
        <text>benzene-1,2,4-triol + O2 = maleylacetate + 2 H(+)</text>
        <dbReference type="Rhea" id="RHEA:35595"/>
        <dbReference type="ChEBI" id="CHEBI:15378"/>
        <dbReference type="ChEBI" id="CHEBI:15379"/>
        <dbReference type="ChEBI" id="CHEBI:16468"/>
        <dbReference type="ChEBI" id="CHEBI:16971"/>
        <dbReference type="EC" id="1.13.11.37"/>
    </reaction>
    <physiologicalReaction direction="left-to-right" evidence="3">
        <dbReference type="Rhea" id="RHEA:35596"/>
    </physiologicalReaction>
</comment>
<comment type="cofactor">
    <cofactor evidence="1">
        <name>Fe(3+)</name>
        <dbReference type="ChEBI" id="CHEBI:29034"/>
    </cofactor>
    <text evidence="1">Binds 1 Fe(3+) ion per subunit.</text>
</comment>
<comment type="subunit">
    <text evidence="3">Homodimer.</text>
</comment>
<comment type="induction">
    <text evidence="3">Expression is slightly induced in the presence of caffeic acid, p-hydroxybenzoic acid and protocatechuic acid.</text>
</comment>
<comment type="disruption phenotype">
    <text evidence="3">Leads to reduced growth on protocatechuic acid and the accumulation of hydroxyquinol, when prcA is also deleted.</text>
</comment>
<comment type="similarity">
    <text evidence="5">Belongs to the intradiol ring-cleavage dioxygenase family.</text>
</comment>
<accession>A2QAP8</accession>
<feature type="chain" id="PRO_0000453620" description="Intradiol ring-cleavage dioxygenase hqdA">
    <location>
        <begin position="1"/>
        <end position="329"/>
    </location>
</feature>
<feature type="binding site" evidence="2">
    <location>
        <position position="167"/>
    </location>
    <ligand>
        <name>Fe cation</name>
        <dbReference type="ChEBI" id="CHEBI:24875"/>
    </ligand>
</feature>
<feature type="binding site" evidence="2">
    <location>
        <position position="201"/>
    </location>
    <ligand>
        <name>Fe cation</name>
        <dbReference type="ChEBI" id="CHEBI:24875"/>
    </ligand>
</feature>
<feature type="binding site" evidence="2">
    <location>
        <position position="225"/>
    </location>
    <ligand>
        <name>Fe cation</name>
        <dbReference type="ChEBI" id="CHEBI:24875"/>
    </ligand>
</feature>
<feature type="binding site" evidence="2">
    <location>
        <position position="227"/>
    </location>
    <ligand>
        <name>Fe cation</name>
        <dbReference type="ChEBI" id="CHEBI:24875"/>
    </ligand>
</feature>